<evidence type="ECO:0000250" key="1"/>
<evidence type="ECO:0000255" key="2"/>
<evidence type="ECO:0000255" key="3">
    <source>
        <dbReference type="PROSITE-ProRule" id="PRU00289"/>
    </source>
</evidence>
<evidence type="ECO:0000256" key="4">
    <source>
        <dbReference type="SAM" id="MobiDB-lite"/>
    </source>
</evidence>
<evidence type="ECO:0000305" key="5"/>
<keyword id="KW-0067">ATP-binding</keyword>
<keyword id="KW-0131">Cell cycle</keyword>
<keyword id="KW-0132">Cell division</keyword>
<keyword id="KW-0997">Cell inner membrane</keyword>
<keyword id="KW-1003">Cell membrane</keyword>
<keyword id="KW-0159">Chromosome partition</keyword>
<keyword id="KW-0238">DNA-binding</keyword>
<keyword id="KW-0472">Membrane</keyword>
<keyword id="KW-0547">Nucleotide-binding</keyword>
<keyword id="KW-1185">Reference proteome</keyword>
<keyword id="KW-0812">Transmembrane</keyword>
<keyword id="KW-1133">Transmembrane helix</keyword>
<name>FTSK_CHLTE</name>
<organism>
    <name type="scientific">Chlorobaculum tepidum (strain ATCC 49652 / DSM 12025 / NBRC 103806 / TLS)</name>
    <name type="common">Chlorobium tepidum</name>
    <dbReference type="NCBI Taxonomy" id="194439"/>
    <lineage>
        <taxon>Bacteria</taxon>
        <taxon>Pseudomonadati</taxon>
        <taxon>Chlorobiota</taxon>
        <taxon>Chlorobiia</taxon>
        <taxon>Chlorobiales</taxon>
        <taxon>Chlorobiaceae</taxon>
        <taxon>Chlorobaculum</taxon>
    </lineage>
</organism>
<proteinExistence type="inferred from homology"/>
<accession>Q8KBK0</accession>
<reference key="1">
    <citation type="journal article" date="2002" name="Proc. Natl. Acad. Sci. U.S.A.">
        <title>The complete genome sequence of Chlorobium tepidum TLS, a photosynthetic, anaerobic, green-sulfur bacterium.</title>
        <authorList>
            <person name="Eisen J.A."/>
            <person name="Nelson K.E."/>
            <person name="Paulsen I.T."/>
            <person name="Heidelberg J.F."/>
            <person name="Wu M."/>
            <person name="Dodson R.J."/>
            <person name="DeBoy R.T."/>
            <person name="Gwinn M.L."/>
            <person name="Nelson W.C."/>
            <person name="Haft D.H."/>
            <person name="Hickey E.K."/>
            <person name="Peterson J.D."/>
            <person name="Durkin A.S."/>
            <person name="Kolonay J.F."/>
            <person name="Yang F."/>
            <person name="Holt I.E."/>
            <person name="Umayam L.A."/>
            <person name="Mason T.M."/>
            <person name="Brenner M."/>
            <person name="Shea T.P."/>
            <person name="Parksey D.S."/>
            <person name="Nierman W.C."/>
            <person name="Feldblyum T.V."/>
            <person name="Hansen C.L."/>
            <person name="Craven M.B."/>
            <person name="Radune D."/>
            <person name="Vamathevan J.J."/>
            <person name="Khouri H.M."/>
            <person name="White O."/>
            <person name="Gruber T.M."/>
            <person name="Ketchum K.A."/>
            <person name="Venter J.C."/>
            <person name="Tettelin H."/>
            <person name="Bryant D.A."/>
            <person name="Fraser C.M."/>
        </authorList>
    </citation>
    <scope>NUCLEOTIDE SEQUENCE [LARGE SCALE GENOMIC DNA]</scope>
    <source>
        <strain>ATCC 49652 / DSM 12025 / NBRC 103806 / TLS</strain>
    </source>
</reference>
<feature type="chain" id="PRO_0000098249" description="DNA translocase FtsK">
    <location>
        <begin position="1"/>
        <end position="804"/>
    </location>
</feature>
<feature type="transmembrane region" description="Helical" evidence="2">
    <location>
        <begin position="61"/>
        <end position="81"/>
    </location>
</feature>
<feature type="transmembrane region" description="Helical" evidence="2">
    <location>
        <begin position="89"/>
        <end position="109"/>
    </location>
</feature>
<feature type="transmembrane region" description="Helical" evidence="2">
    <location>
        <begin position="133"/>
        <end position="153"/>
    </location>
</feature>
<feature type="transmembrane region" description="Helical" evidence="2">
    <location>
        <begin position="158"/>
        <end position="178"/>
    </location>
</feature>
<feature type="topological domain" description="Cytoplasmic" evidence="2">
    <location>
        <begin position="179"/>
        <end position="804"/>
    </location>
</feature>
<feature type="domain" description="FtsK" evidence="3">
    <location>
        <begin position="453"/>
        <end position="650"/>
    </location>
</feature>
<feature type="region of interest" description="Disordered" evidence="4">
    <location>
        <begin position="206"/>
        <end position="254"/>
    </location>
</feature>
<feature type="region of interest" description="Disordered" evidence="4">
    <location>
        <begin position="707"/>
        <end position="729"/>
    </location>
</feature>
<feature type="compositionally biased region" description="Low complexity" evidence="4">
    <location>
        <begin position="714"/>
        <end position="723"/>
    </location>
</feature>
<feature type="binding site" evidence="3">
    <location>
        <begin position="474"/>
        <end position="479"/>
    </location>
    <ligand>
        <name>ATP</name>
        <dbReference type="ChEBI" id="CHEBI:30616"/>
    </ligand>
</feature>
<dbReference type="EMBL" id="AE006470">
    <property type="protein sequence ID" value="AAM73008.1"/>
    <property type="molecule type" value="Genomic_DNA"/>
</dbReference>
<dbReference type="RefSeq" id="NP_662666.1">
    <property type="nucleotide sequence ID" value="NC_002932.3"/>
</dbReference>
<dbReference type="SMR" id="Q8KBK0"/>
<dbReference type="STRING" id="194439.CT1787"/>
<dbReference type="EnsemblBacteria" id="AAM73008">
    <property type="protein sequence ID" value="AAM73008"/>
    <property type="gene ID" value="CT1787"/>
</dbReference>
<dbReference type="KEGG" id="cte:CT1787"/>
<dbReference type="PATRIC" id="fig|194439.7.peg.1621"/>
<dbReference type="eggNOG" id="COG1674">
    <property type="taxonomic scope" value="Bacteria"/>
</dbReference>
<dbReference type="HOGENOM" id="CLU_001981_9_7_10"/>
<dbReference type="OrthoDB" id="9807790at2"/>
<dbReference type="Proteomes" id="UP000001007">
    <property type="component" value="Chromosome"/>
</dbReference>
<dbReference type="GO" id="GO:0005886">
    <property type="term" value="C:plasma membrane"/>
    <property type="evidence" value="ECO:0007669"/>
    <property type="project" value="UniProtKB-SubCell"/>
</dbReference>
<dbReference type="GO" id="GO:0005524">
    <property type="term" value="F:ATP binding"/>
    <property type="evidence" value="ECO:0007669"/>
    <property type="project" value="UniProtKB-KW"/>
</dbReference>
<dbReference type="GO" id="GO:0016887">
    <property type="term" value="F:ATP hydrolysis activity"/>
    <property type="evidence" value="ECO:0007669"/>
    <property type="project" value="InterPro"/>
</dbReference>
<dbReference type="GO" id="GO:0003677">
    <property type="term" value="F:DNA binding"/>
    <property type="evidence" value="ECO:0007669"/>
    <property type="project" value="UniProtKB-KW"/>
</dbReference>
<dbReference type="GO" id="GO:0051301">
    <property type="term" value="P:cell division"/>
    <property type="evidence" value="ECO:0007669"/>
    <property type="project" value="UniProtKB-KW"/>
</dbReference>
<dbReference type="GO" id="GO:0007059">
    <property type="term" value="P:chromosome segregation"/>
    <property type="evidence" value="ECO:0007669"/>
    <property type="project" value="UniProtKB-KW"/>
</dbReference>
<dbReference type="CDD" id="cd01127">
    <property type="entry name" value="TrwB_TraG_TraD_VirD4"/>
    <property type="match status" value="1"/>
</dbReference>
<dbReference type="Gene3D" id="3.30.980.40">
    <property type="match status" value="1"/>
</dbReference>
<dbReference type="Gene3D" id="3.40.50.300">
    <property type="entry name" value="P-loop containing nucleotide triphosphate hydrolases"/>
    <property type="match status" value="1"/>
</dbReference>
<dbReference type="Gene3D" id="1.10.10.10">
    <property type="entry name" value="Winged helix-like DNA-binding domain superfamily/Winged helix DNA-binding domain"/>
    <property type="match status" value="1"/>
</dbReference>
<dbReference type="InterPro" id="IPR003593">
    <property type="entry name" value="AAA+_ATPase"/>
</dbReference>
<dbReference type="InterPro" id="IPR050206">
    <property type="entry name" value="FtsK/SpoIIIE/SftA"/>
</dbReference>
<dbReference type="InterPro" id="IPR025199">
    <property type="entry name" value="FtsK_4TM"/>
</dbReference>
<dbReference type="InterPro" id="IPR041027">
    <property type="entry name" value="FtsK_alpha"/>
</dbReference>
<dbReference type="InterPro" id="IPR002543">
    <property type="entry name" value="FtsK_dom"/>
</dbReference>
<dbReference type="InterPro" id="IPR018541">
    <property type="entry name" value="Ftsk_gamma"/>
</dbReference>
<dbReference type="InterPro" id="IPR027417">
    <property type="entry name" value="P-loop_NTPase"/>
</dbReference>
<dbReference type="InterPro" id="IPR036388">
    <property type="entry name" value="WH-like_DNA-bd_sf"/>
</dbReference>
<dbReference type="InterPro" id="IPR036390">
    <property type="entry name" value="WH_DNA-bd_sf"/>
</dbReference>
<dbReference type="PANTHER" id="PTHR22683:SF41">
    <property type="entry name" value="DNA TRANSLOCASE FTSK"/>
    <property type="match status" value="1"/>
</dbReference>
<dbReference type="PANTHER" id="PTHR22683">
    <property type="entry name" value="SPORULATION PROTEIN RELATED"/>
    <property type="match status" value="1"/>
</dbReference>
<dbReference type="Pfam" id="PF13491">
    <property type="entry name" value="FtsK_4TM"/>
    <property type="match status" value="1"/>
</dbReference>
<dbReference type="Pfam" id="PF17854">
    <property type="entry name" value="FtsK_alpha"/>
    <property type="match status" value="1"/>
</dbReference>
<dbReference type="Pfam" id="PF09397">
    <property type="entry name" value="FtsK_gamma"/>
    <property type="match status" value="1"/>
</dbReference>
<dbReference type="Pfam" id="PF01580">
    <property type="entry name" value="FtsK_SpoIIIE"/>
    <property type="match status" value="1"/>
</dbReference>
<dbReference type="SMART" id="SM00382">
    <property type="entry name" value="AAA"/>
    <property type="match status" value="1"/>
</dbReference>
<dbReference type="SMART" id="SM00843">
    <property type="entry name" value="Ftsk_gamma"/>
    <property type="match status" value="1"/>
</dbReference>
<dbReference type="SUPFAM" id="SSF52540">
    <property type="entry name" value="P-loop containing nucleoside triphosphate hydrolases"/>
    <property type="match status" value="1"/>
</dbReference>
<dbReference type="SUPFAM" id="SSF46785">
    <property type="entry name" value="Winged helix' DNA-binding domain"/>
    <property type="match status" value="1"/>
</dbReference>
<dbReference type="PROSITE" id="PS50901">
    <property type="entry name" value="FTSK"/>
    <property type="match status" value="1"/>
</dbReference>
<gene>
    <name type="primary">ftsK</name>
    <name type="ordered locus">CT1787</name>
</gene>
<protein>
    <recommendedName>
        <fullName>DNA translocase FtsK</fullName>
    </recommendedName>
</protein>
<sequence>MLAALFSIAAVFGFHAEDEPYIVTLPWYELFSSAAKAVAGTIHNPFGLFGARVSVFFIRVLLGYPSVMPLFGFLVLGWHLFRAKPLGPGLFFLVYTLLMALDLSAMFGLSMLPLADLMSGATGRMMASFLSTVIGYPGAWALTAIIAAVLTFYMGRDFIVDTIAGVSGFFGKLLATVQAIRAERHRKRREKEEMRVRKKAERMAAVLEKEQRKRDKKAQRARKAGDASKQKAAPFENSPETPAPVMDVEPAPPLLNPAVSEPVVIPAEVEEIRTPEPAPVRPEEGPEMIIKPGVQEAEADLDERALKVRTHDHVKYRFPSIDLLRRPKDEDESYDERHLAETKDRLLEKLRIYKIDVIRIATTVGPRVALFELELAPEVKISRIKSLENDLAMAMASSSGGIRIIAPIPGKNAIGVEIPISKPRPVVMRSVLQVEKFKNNSMALPIVLGKSISNEVIVDDLAAMPHLLIAGATGAGKSVAINVLLTSLLYSKKPDEVKFVLIDPKRVELKPYKLLKDHFLPKIPGMEEQIIVTDPQKAVSALRSVVREMEHRYELLEQCGVRNIGEYNRKMKDEAMFYLVVVVDELADLMITAGREVEEPITRLAQMARAVGIHLIVATQRPSVDIITGIIKANFPSRIAFQVASKVDSRTILDVSGAEQLLGSGDMLFQSAKMSKPQRIQCPYISLSEVDAITEFIGQQPPLRAECMLPEPPSSSGNGSSSGFDQDRGRRDSMFEEAARLVVMHQQASVSLLQRRLRLGFSRAGRVMDQLEQSGIVSAGDGSKPREVLVKNEDSLELLLRNLD</sequence>
<comment type="function">
    <text evidence="1">Essential cell division protein that coordinates cell division and chromosome segregation. The N-terminus is involved in assembly of the cell-division machinery. The C-terminus functions as a DNA motor that moves dsDNA in an ATP-dependent manner towards the dif recombination site, which is located within the replication terminus region. Required for activation of the Xer recombinase, allowing activation of chromosome unlinking by recombination (By similarity).</text>
</comment>
<comment type="subunit">
    <text evidence="1">Homohexamer. Forms a ring that surrounds DNA (By similarity).</text>
</comment>
<comment type="subcellular location">
    <subcellularLocation>
        <location evidence="1">Cell inner membrane</location>
        <topology evidence="1">Multi-pass membrane protein</topology>
    </subcellularLocation>
    <text evidence="1">Located at the septum.</text>
</comment>
<comment type="domain">
    <text evidence="1">Consists of an N-terminal domain, which is sufficient for the localization to the septal ring and is required for cell division, followed by a linker domain, and a C-terminal domain, which forms the translocation motor involved in chromosome segregation. The C-terminal domain can be further subdivided into alpha, beta and gamma subdomains. The alpha and beta subdomains form the DNA pump, and the gamma subdomain is a regulatory subdomain (By similarity).</text>
</comment>
<comment type="similarity">
    <text evidence="5">Belongs to the FtsK/SpoIIIE/SftA family.</text>
</comment>